<evidence type="ECO:0000250" key="1"/>
<evidence type="ECO:0000255" key="2"/>
<evidence type="ECO:0000305" key="3"/>
<proteinExistence type="inferred from homology"/>
<protein>
    <recommendedName>
        <fullName>Methylamine dehydrogenase light chain</fullName>
        <shortName>MADH</shortName>
        <ecNumber>1.4.9.1</ecNumber>
    </recommendedName>
    <alternativeName>
        <fullName>Methylamine dehydrogenase (amicyanin)</fullName>
    </alternativeName>
</protein>
<gene>
    <name type="primary">mauA</name>
    <name type="ordered locus">Mfla_0551</name>
</gene>
<comment type="function">
    <text>Methylamine dehydrogenase carries out the oxidation of methylamine. Electrons are passed from methylamine dehydrogenase to amicyanin.</text>
</comment>
<comment type="catalytic activity">
    <reaction>
        <text>2 oxidized [amicyanin] + methylamine + H2O = 2 reduced [amicyanin] + formaldehyde + NH4(+) + 2 H(+)</text>
        <dbReference type="Rhea" id="RHEA:30207"/>
        <dbReference type="Rhea" id="RHEA-COMP:11100"/>
        <dbReference type="Rhea" id="RHEA-COMP:11101"/>
        <dbReference type="ChEBI" id="CHEBI:15377"/>
        <dbReference type="ChEBI" id="CHEBI:15378"/>
        <dbReference type="ChEBI" id="CHEBI:16842"/>
        <dbReference type="ChEBI" id="CHEBI:28938"/>
        <dbReference type="ChEBI" id="CHEBI:29036"/>
        <dbReference type="ChEBI" id="CHEBI:49552"/>
        <dbReference type="ChEBI" id="CHEBI:59338"/>
        <dbReference type="EC" id="1.4.9.1"/>
    </reaction>
</comment>
<comment type="cofactor">
    <cofactor evidence="1">
        <name>tryptophan tryptophylquinone residue</name>
        <dbReference type="ChEBI" id="CHEBI:20251"/>
    </cofactor>
    <text evidence="1">Uses a protein-derived tryptophan tryptophylquinone (TTQ) cofactor.</text>
</comment>
<comment type="pathway">
    <text>One-carbon metabolism; methylamine degradation; formaldehyde from methylamine: step 1/1.</text>
</comment>
<comment type="subunit">
    <text>Heterotetramer of two light and two heavy chains.</text>
</comment>
<comment type="subcellular location">
    <subcellularLocation>
        <location>Periplasm</location>
    </subcellularLocation>
</comment>
<comment type="PTM">
    <text>Predicted to be exported by the Tat system. The position of the signal peptide cleavage has not been experimentally proven.</text>
</comment>
<comment type="PTM">
    <text>Tryptophan tryptophylquinone (TTQ) is formed by oxidation of the indole ring of a tryptophan to form tryptophylquinone followed by covalent cross-linking with another tryptophan residue.</text>
</comment>
<comment type="similarity">
    <text evidence="3">Belongs to the aromatic amine dehydrogenase light chain family.</text>
</comment>
<name>DHML_METFK</name>
<sequence>MKKNTGFDSGIEKLARKTASKTGRRSFIGKLGGFLVGSALLPLLPVDRRGRMNEAHAETKGVLGREGYKPQDKDPKSCDYWRHCSIDGNLCDCCGGSLTSCPPGTELSPSSWVASCFNPGDGQTYLIAYRDCCGKQTCGRCNCVNVQGELPVYRPEFNNDIVWCFGADNDAMTYHCTVSPIVGKAS</sequence>
<reference key="1">
    <citation type="journal article" date="1995" name="J. Bacteriol.">
        <title>Cloning, sequencing, and mutation of a gene for azurin in Methylobacillus flagellatum KT.</title>
        <authorList>
            <person name="Gak E.R."/>
            <person name="Chistoserdov A.Y."/>
            <person name="Lidstrom M.E."/>
        </authorList>
    </citation>
    <scope>NUCLEOTIDE SEQUENCE [GENOMIC DNA]</scope>
</reference>
<reference key="2">
    <citation type="submission" date="2006-03" db="EMBL/GenBank/DDBJ databases">
        <title>Complete sequence of Methylobacillus flagellatus KT.</title>
        <authorList>
            <consortium name="US DOE Joint Genome Institute"/>
            <person name="Copeland A."/>
            <person name="Lucas S."/>
            <person name="Lapidus A."/>
            <person name="Barry K."/>
            <person name="Detter J.C."/>
            <person name="Glavina del Rio T."/>
            <person name="Hammon N."/>
            <person name="Israni S."/>
            <person name="Dalin E."/>
            <person name="Tice H."/>
            <person name="Pitluck S."/>
            <person name="Brettin T."/>
            <person name="Bruce D."/>
            <person name="Han C."/>
            <person name="Tapia R."/>
            <person name="Saunders E."/>
            <person name="Gilna P."/>
            <person name="Schmutz J."/>
            <person name="Larimer F."/>
            <person name="Land M."/>
            <person name="Kyrpides N."/>
            <person name="Anderson I."/>
            <person name="Richardson P."/>
        </authorList>
    </citation>
    <scope>NUCLEOTIDE SEQUENCE [LARGE SCALE GENOMIC DNA]</scope>
    <source>
        <strain>ATCC 51484 / DSM 6875 / VKM B-1610 / KT</strain>
    </source>
</reference>
<feature type="signal peptide" description="Tat-type signal" evidence="2">
    <location>
        <begin position="1"/>
        <end position="57"/>
    </location>
</feature>
<feature type="chain" id="PRO_0000025573" description="Methylamine dehydrogenase light chain">
    <location>
        <begin position="58"/>
        <end position="186"/>
    </location>
</feature>
<feature type="modified residue" description="Tryptophylquinone" evidence="1">
    <location>
        <position position="112"/>
    </location>
</feature>
<feature type="disulfide bond" evidence="1">
    <location>
        <begin position="78"/>
        <end position="143"/>
    </location>
</feature>
<feature type="disulfide bond" evidence="1">
    <location>
        <begin position="84"/>
        <end position="116"/>
    </location>
</feature>
<feature type="disulfide bond" evidence="1">
    <location>
        <begin position="91"/>
        <end position="176"/>
    </location>
</feature>
<feature type="disulfide bond" evidence="1">
    <location>
        <begin position="93"/>
        <end position="141"/>
    </location>
</feature>
<feature type="disulfide bond" evidence="1">
    <location>
        <begin position="101"/>
        <end position="132"/>
    </location>
</feature>
<feature type="disulfide bond" evidence="1">
    <location>
        <begin position="133"/>
        <end position="164"/>
    </location>
</feature>
<feature type="cross-link" description="Tryptophan tryptophylquinone (Trp-Trp)" evidence="1">
    <location>
        <begin position="112"/>
        <end position="163"/>
    </location>
</feature>
<organism>
    <name type="scientific">Methylobacillus flagellatus (strain ATCC 51484 / DSM 6875 / VKM B-1610 / KT)</name>
    <dbReference type="NCBI Taxonomy" id="265072"/>
    <lineage>
        <taxon>Bacteria</taxon>
        <taxon>Pseudomonadati</taxon>
        <taxon>Pseudomonadota</taxon>
        <taxon>Betaproteobacteria</taxon>
        <taxon>Nitrosomonadales</taxon>
        <taxon>Methylophilaceae</taxon>
        <taxon>Methylobacillus</taxon>
    </lineage>
</organism>
<accession>Q50425</accession>
<accession>Q1H3W6</accession>
<dbReference type="EC" id="1.4.9.1"/>
<dbReference type="EMBL" id="L37427">
    <property type="protein sequence ID" value="AAC41474.1"/>
    <property type="molecule type" value="Genomic_DNA"/>
</dbReference>
<dbReference type="EMBL" id="CP000284">
    <property type="protein sequence ID" value="ABE48821.1"/>
    <property type="molecule type" value="Genomic_DNA"/>
</dbReference>
<dbReference type="RefSeq" id="WP_011478918.1">
    <property type="nucleotide sequence ID" value="NC_007947.1"/>
</dbReference>
<dbReference type="SMR" id="Q50425"/>
<dbReference type="STRING" id="265072.Mfla_0551"/>
<dbReference type="KEGG" id="mfa:Mfla_0551"/>
<dbReference type="eggNOG" id="ENOG502ZHBX">
    <property type="taxonomic scope" value="Bacteria"/>
</dbReference>
<dbReference type="HOGENOM" id="CLU_116271_0_0_4"/>
<dbReference type="UniPathway" id="UPA00895">
    <property type="reaction ID" value="UER00870"/>
</dbReference>
<dbReference type="Proteomes" id="UP000002440">
    <property type="component" value="Chromosome"/>
</dbReference>
<dbReference type="GO" id="GO:0030288">
    <property type="term" value="C:outer membrane-bounded periplasmic space"/>
    <property type="evidence" value="ECO:0007669"/>
    <property type="project" value="InterPro"/>
</dbReference>
<dbReference type="GO" id="GO:0030058">
    <property type="term" value="F:aliphatic amine dehydrogenase activity"/>
    <property type="evidence" value="ECO:0007669"/>
    <property type="project" value="InterPro"/>
</dbReference>
<dbReference type="GO" id="GO:0052876">
    <property type="term" value="F:methylamine dehydrogenase (amicyanin) activity"/>
    <property type="evidence" value="ECO:0007669"/>
    <property type="project" value="UniProtKB-EC"/>
</dbReference>
<dbReference type="GO" id="GO:0009308">
    <property type="term" value="P:amine metabolic process"/>
    <property type="evidence" value="ECO:0007669"/>
    <property type="project" value="InterPro"/>
</dbReference>
<dbReference type="Gene3D" id="2.60.30.10">
    <property type="entry name" value="Methylamine/Aralkylamine dehydrogenase light chain"/>
    <property type="match status" value="1"/>
</dbReference>
<dbReference type="InterPro" id="IPR016008">
    <property type="entry name" value="Amine_DH_Ltc"/>
</dbReference>
<dbReference type="InterPro" id="IPR036560">
    <property type="entry name" value="MADH/AADH_L_sf"/>
</dbReference>
<dbReference type="InterPro" id="IPR013504">
    <property type="entry name" value="MADH/AADH_Ltc_C_dom"/>
</dbReference>
<dbReference type="InterPro" id="IPR004229">
    <property type="entry name" value="MeN_DH_Ltc"/>
</dbReference>
<dbReference type="NCBIfam" id="TIGR02659">
    <property type="entry name" value="TTQ_MADH_Lt"/>
    <property type="match status" value="1"/>
</dbReference>
<dbReference type="Pfam" id="PF02975">
    <property type="entry name" value="Me-amine-dh_L"/>
    <property type="match status" value="1"/>
</dbReference>
<dbReference type="PIRSF" id="PIRSF000192">
    <property type="entry name" value="Amine_dh_beta"/>
    <property type="match status" value="1"/>
</dbReference>
<dbReference type="SUPFAM" id="SSF57561">
    <property type="entry name" value="Methylamine dehydrogenase, L chain"/>
    <property type="match status" value="1"/>
</dbReference>
<keyword id="KW-1015">Disulfide bond</keyword>
<keyword id="KW-0249">Electron transport</keyword>
<keyword id="KW-0560">Oxidoreductase</keyword>
<keyword id="KW-0574">Periplasm</keyword>
<keyword id="KW-1185">Reference proteome</keyword>
<keyword id="KW-0732">Signal</keyword>
<keyword id="KW-0813">Transport</keyword>
<keyword id="KW-0824">TTQ</keyword>